<feature type="chain" id="PRO_0000179337" description="Trigger factor">
    <location>
        <begin position="1"/>
        <end position="431"/>
    </location>
</feature>
<feature type="domain" description="PPIase FKBP-type" evidence="1">
    <location>
        <begin position="164"/>
        <end position="249"/>
    </location>
</feature>
<proteinExistence type="inferred from homology"/>
<name>TIG_CLOAB</name>
<dbReference type="EC" id="5.2.1.8" evidence="1"/>
<dbReference type="EMBL" id="AE001437">
    <property type="protein sequence ID" value="AAK80588.1"/>
    <property type="molecule type" value="Genomic_DNA"/>
</dbReference>
<dbReference type="PIR" id="A97225">
    <property type="entry name" value="A97225"/>
</dbReference>
<dbReference type="RefSeq" id="NP_349248.1">
    <property type="nucleotide sequence ID" value="NC_003030.1"/>
</dbReference>
<dbReference type="RefSeq" id="WP_010965929.1">
    <property type="nucleotide sequence ID" value="NC_003030.1"/>
</dbReference>
<dbReference type="SMR" id="Q97FT6"/>
<dbReference type="STRING" id="272562.CA_C2641"/>
<dbReference type="GeneID" id="44999109"/>
<dbReference type="KEGG" id="cac:CA_C2641"/>
<dbReference type="PATRIC" id="fig|272562.8.peg.2830"/>
<dbReference type="eggNOG" id="COG0544">
    <property type="taxonomic scope" value="Bacteria"/>
</dbReference>
<dbReference type="HOGENOM" id="CLU_033058_3_2_9"/>
<dbReference type="OrthoDB" id="9767721at2"/>
<dbReference type="Proteomes" id="UP000000814">
    <property type="component" value="Chromosome"/>
</dbReference>
<dbReference type="GO" id="GO:0005737">
    <property type="term" value="C:cytoplasm"/>
    <property type="evidence" value="ECO:0007669"/>
    <property type="project" value="UniProtKB-SubCell"/>
</dbReference>
<dbReference type="GO" id="GO:0003755">
    <property type="term" value="F:peptidyl-prolyl cis-trans isomerase activity"/>
    <property type="evidence" value="ECO:0007669"/>
    <property type="project" value="UniProtKB-UniRule"/>
</dbReference>
<dbReference type="GO" id="GO:0044183">
    <property type="term" value="F:protein folding chaperone"/>
    <property type="evidence" value="ECO:0007669"/>
    <property type="project" value="TreeGrafter"/>
</dbReference>
<dbReference type="GO" id="GO:0043022">
    <property type="term" value="F:ribosome binding"/>
    <property type="evidence" value="ECO:0007669"/>
    <property type="project" value="TreeGrafter"/>
</dbReference>
<dbReference type="GO" id="GO:0051083">
    <property type="term" value="P:'de novo' cotranslational protein folding"/>
    <property type="evidence" value="ECO:0007669"/>
    <property type="project" value="TreeGrafter"/>
</dbReference>
<dbReference type="GO" id="GO:0051301">
    <property type="term" value="P:cell division"/>
    <property type="evidence" value="ECO:0007669"/>
    <property type="project" value="UniProtKB-KW"/>
</dbReference>
<dbReference type="GO" id="GO:0061077">
    <property type="term" value="P:chaperone-mediated protein folding"/>
    <property type="evidence" value="ECO:0007669"/>
    <property type="project" value="TreeGrafter"/>
</dbReference>
<dbReference type="GO" id="GO:0015031">
    <property type="term" value="P:protein transport"/>
    <property type="evidence" value="ECO:0007669"/>
    <property type="project" value="UniProtKB-UniRule"/>
</dbReference>
<dbReference type="GO" id="GO:0043335">
    <property type="term" value="P:protein unfolding"/>
    <property type="evidence" value="ECO:0007669"/>
    <property type="project" value="TreeGrafter"/>
</dbReference>
<dbReference type="FunFam" id="3.10.50.40:FF:000001">
    <property type="entry name" value="Trigger factor"/>
    <property type="match status" value="1"/>
</dbReference>
<dbReference type="Gene3D" id="3.10.50.40">
    <property type="match status" value="1"/>
</dbReference>
<dbReference type="Gene3D" id="3.30.70.1050">
    <property type="entry name" value="Trigger factor ribosome-binding domain"/>
    <property type="match status" value="1"/>
</dbReference>
<dbReference type="Gene3D" id="1.10.3120.10">
    <property type="entry name" value="Trigger factor, C-terminal domain"/>
    <property type="match status" value="1"/>
</dbReference>
<dbReference type="HAMAP" id="MF_00303">
    <property type="entry name" value="Trigger_factor_Tig"/>
    <property type="match status" value="1"/>
</dbReference>
<dbReference type="InterPro" id="IPR046357">
    <property type="entry name" value="PPIase_dom_sf"/>
</dbReference>
<dbReference type="InterPro" id="IPR001179">
    <property type="entry name" value="PPIase_FKBP_dom"/>
</dbReference>
<dbReference type="InterPro" id="IPR005215">
    <property type="entry name" value="Trig_fac"/>
</dbReference>
<dbReference type="InterPro" id="IPR008880">
    <property type="entry name" value="Trigger_fac_C"/>
</dbReference>
<dbReference type="InterPro" id="IPR037041">
    <property type="entry name" value="Trigger_fac_C_sf"/>
</dbReference>
<dbReference type="InterPro" id="IPR008881">
    <property type="entry name" value="Trigger_fac_ribosome-bd_bac"/>
</dbReference>
<dbReference type="InterPro" id="IPR036611">
    <property type="entry name" value="Trigger_fac_ribosome-bd_sf"/>
</dbReference>
<dbReference type="InterPro" id="IPR027304">
    <property type="entry name" value="Trigger_fact/SurA_dom_sf"/>
</dbReference>
<dbReference type="NCBIfam" id="TIGR00115">
    <property type="entry name" value="tig"/>
    <property type="match status" value="1"/>
</dbReference>
<dbReference type="PANTHER" id="PTHR30560">
    <property type="entry name" value="TRIGGER FACTOR CHAPERONE AND PEPTIDYL-PROLYL CIS/TRANS ISOMERASE"/>
    <property type="match status" value="1"/>
</dbReference>
<dbReference type="PANTHER" id="PTHR30560:SF3">
    <property type="entry name" value="TRIGGER FACTOR-LIKE PROTEIN TIG, CHLOROPLASTIC"/>
    <property type="match status" value="1"/>
</dbReference>
<dbReference type="Pfam" id="PF00254">
    <property type="entry name" value="FKBP_C"/>
    <property type="match status" value="1"/>
</dbReference>
<dbReference type="Pfam" id="PF05698">
    <property type="entry name" value="Trigger_C"/>
    <property type="match status" value="1"/>
</dbReference>
<dbReference type="Pfam" id="PF05697">
    <property type="entry name" value="Trigger_N"/>
    <property type="match status" value="1"/>
</dbReference>
<dbReference type="PIRSF" id="PIRSF003095">
    <property type="entry name" value="Trigger_factor"/>
    <property type="match status" value="1"/>
</dbReference>
<dbReference type="SUPFAM" id="SSF54534">
    <property type="entry name" value="FKBP-like"/>
    <property type="match status" value="1"/>
</dbReference>
<dbReference type="SUPFAM" id="SSF109998">
    <property type="entry name" value="Triger factor/SurA peptide-binding domain-like"/>
    <property type="match status" value="1"/>
</dbReference>
<dbReference type="SUPFAM" id="SSF102735">
    <property type="entry name" value="Trigger factor ribosome-binding domain"/>
    <property type="match status" value="1"/>
</dbReference>
<dbReference type="PROSITE" id="PS50059">
    <property type="entry name" value="FKBP_PPIASE"/>
    <property type="match status" value="1"/>
</dbReference>
<organism>
    <name type="scientific">Clostridium acetobutylicum (strain ATCC 824 / DSM 792 / JCM 1419 / IAM 19013 / LMG 5710 / NBRC 13948 / NRRL B-527 / VKM B-1787 / 2291 / W)</name>
    <dbReference type="NCBI Taxonomy" id="272562"/>
    <lineage>
        <taxon>Bacteria</taxon>
        <taxon>Bacillati</taxon>
        <taxon>Bacillota</taxon>
        <taxon>Clostridia</taxon>
        <taxon>Eubacteriales</taxon>
        <taxon>Clostridiaceae</taxon>
        <taxon>Clostridium</taxon>
    </lineage>
</organism>
<accession>Q97FT6</accession>
<protein>
    <recommendedName>
        <fullName evidence="1">Trigger factor</fullName>
        <shortName evidence="1">TF</shortName>
        <ecNumber evidence="1">5.2.1.8</ecNumber>
    </recommendedName>
    <alternativeName>
        <fullName evidence="1">PPIase</fullName>
    </alternativeName>
</protein>
<reference key="1">
    <citation type="journal article" date="2001" name="J. Bacteriol.">
        <title>Genome sequence and comparative analysis of the solvent-producing bacterium Clostridium acetobutylicum.</title>
        <authorList>
            <person name="Noelling J."/>
            <person name="Breton G."/>
            <person name="Omelchenko M.V."/>
            <person name="Makarova K.S."/>
            <person name="Zeng Q."/>
            <person name="Gibson R."/>
            <person name="Lee H.M."/>
            <person name="Dubois J."/>
            <person name="Qiu D."/>
            <person name="Hitti J."/>
            <person name="Wolf Y.I."/>
            <person name="Tatusov R.L."/>
            <person name="Sabathe F."/>
            <person name="Doucette-Stamm L.A."/>
            <person name="Soucaille P."/>
            <person name="Daly M.J."/>
            <person name="Bennett G.N."/>
            <person name="Koonin E.V."/>
            <person name="Smith D.R."/>
        </authorList>
    </citation>
    <scope>NUCLEOTIDE SEQUENCE [LARGE SCALE GENOMIC DNA]</scope>
    <source>
        <strain>ATCC 824 / DSM 792 / JCM 1419 / IAM 19013 / LMG 5710 / NBRC 13948 / NRRL B-527 / VKM B-1787 / 2291 / W</strain>
    </source>
</reference>
<gene>
    <name evidence="1" type="primary">tig</name>
    <name type="ordered locus">CA_C2641</name>
</gene>
<comment type="function">
    <text evidence="1">Involved in protein export. Acts as a chaperone by maintaining the newly synthesized protein in an open conformation. Functions as a peptidyl-prolyl cis-trans isomerase.</text>
</comment>
<comment type="catalytic activity">
    <reaction evidence="1">
        <text>[protein]-peptidylproline (omega=180) = [protein]-peptidylproline (omega=0)</text>
        <dbReference type="Rhea" id="RHEA:16237"/>
        <dbReference type="Rhea" id="RHEA-COMP:10747"/>
        <dbReference type="Rhea" id="RHEA-COMP:10748"/>
        <dbReference type="ChEBI" id="CHEBI:83833"/>
        <dbReference type="ChEBI" id="CHEBI:83834"/>
        <dbReference type="EC" id="5.2.1.8"/>
    </reaction>
</comment>
<comment type="subcellular location">
    <subcellularLocation>
        <location>Cytoplasm</location>
    </subcellularLocation>
    <text evidence="1">About half TF is bound to the ribosome near the polypeptide exit tunnel while the other half is free in the cytoplasm.</text>
</comment>
<comment type="domain">
    <text evidence="1">Consists of 3 domains; the N-terminus binds the ribosome, the middle domain has PPIase activity, while the C-terminus has intrinsic chaperone activity on its own.</text>
</comment>
<comment type="similarity">
    <text evidence="1">Belongs to the FKBP-type PPIase family. Tig subfamily.</text>
</comment>
<keyword id="KW-0131">Cell cycle</keyword>
<keyword id="KW-0132">Cell division</keyword>
<keyword id="KW-0143">Chaperone</keyword>
<keyword id="KW-0963">Cytoplasm</keyword>
<keyword id="KW-0413">Isomerase</keyword>
<keyword id="KW-1185">Reference proteome</keyword>
<keyword id="KW-0697">Rotamase</keyword>
<sequence>MNSKMEKLEKNVIKFEITVDESKFNEAVIKSYNKNRRRFNVPGFRKGKAPLNIIKNYYGVGVLYEDAINFCIDDTYPEVIKENDIHPVAYPEIDIVTLEEGKDFVYTAKVTVKPEVELGEYKGVEVTKVEYPVTDEDVENELKGMQEKNARIELKEDGEAVEKGDIAVIDFKGYVDDVAFEGGEGKDYSLEIGSGTFIDNFEDQLVGLKKDESKDVNVKFPEEYGKEELNGKPAKFEVTIKEIKRKELPALDDEFAKEVSEFDTLDEVKADIRSKMEKANEEKAKIEFEDKVVDAAVENAKIEIPEVMVKNETDQMLKELESRLRYQGLDLKSYYEYTNSSEEKVRDYMKETADKRVRTKLVMEKISEVEKVEATEEELKEKAKEMAQQYTNKDLDKMAELVLNSQRSMIEQDVINGKVIDLLVENAKVVE</sequence>
<evidence type="ECO:0000255" key="1">
    <source>
        <dbReference type="HAMAP-Rule" id="MF_00303"/>
    </source>
</evidence>